<dbReference type="EC" id="2.7.1.30" evidence="1"/>
<dbReference type="EMBL" id="CP001043">
    <property type="protein sequence ID" value="ACC69612.1"/>
    <property type="molecule type" value="Genomic_DNA"/>
</dbReference>
<dbReference type="RefSeq" id="WP_012399838.1">
    <property type="nucleotide sequence ID" value="NC_010622.1"/>
</dbReference>
<dbReference type="SMR" id="B2JD95"/>
<dbReference type="STRING" id="391038.Bphy_0419"/>
<dbReference type="KEGG" id="bph:Bphy_0419"/>
<dbReference type="eggNOG" id="COG0554">
    <property type="taxonomic scope" value="Bacteria"/>
</dbReference>
<dbReference type="HOGENOM" id="CLU_009281_2_3_4"/>
<dbReference type="OrthoDB" id="9805576at2"/>
<dbReference type="UniPathway" id="UPA00618">
    <property type="reaction ID" value="UER00672"/>
</dbReference>
<dbReference type="Proteomes" id="UP000001192">
    <property type="component" value="Chromosome 1"/>
</dbReference>
<dbReference type="GO" id="GO:0005829">
    <property type="term" value="C:cytosol"/>
    <property type="evidence" value="ECO:0007669"/>
    <property type="project" value="TreeGrafter"/>
</dbReference>
<dbReference type="GO" id="GO:0005524">
    <property type="term" value="F:ATP binding"/>
    <property type="evidence" value="ECO:0007669"/>
    <property type="project" value="UniProtKB-UniRule"/>
</dbReference>
<dbReference type="GO" id="GO:0004370">
    <property type="term" value="F:glycerol kinase activity"/>
    <property type="evidence" value="ECO:0000250"/>
    <property type="project" value="UniProtKB"/>
</dbReference>
<dbReference type="GO" id="GO:0019563">
    <property type="term" value="P:glycerol catabolic process"/>
    <property type="evidence" value="ECO:0007669"/>
    <property type="project" value="UniProtKB-UniRule"/>
</dbReference>
<dbReference type="GO" id="GO:0006071">
    <property type="term" value="P:glycerol metabolic process"/>
    <property type="evidence" value="ECO:0000250"/>
    <property type="project" value="UniProtKB"/>
</dbReference>
<dbReference type="GO" id="GO:0006072">
    <property type="term" value="P:glycerol-3-phosphate metabolic process"/>
    <property type="evidence" value="ECO:0007669"/>
    <property type="project" value="InterPro"/>
</dbReference>
<dbReference type="CDD" id="cd07786">
    <property type="entry name" value="FGGY_EcGK_like"/>
    <property type="match status" value="1"/>
</dbReference>
<dbReference type="FunFam" id="3.30.420.40:FF:000007">
    <property type="entry name" value="Glycerol kinase"/>
    <property type="match status" value="1"/>
</dbReference>
<dbReference type="FunFam" id="3.30.420.40:FF:000008">
    <property type="entry name" value="Glycerol kinase"/>
    <property type="match status" value="1"/>
</dbReference>
<dbReference type="Gene3D" id="3.30.420.40">
    <property type="match status" value="2"/>
</dbReference>
<dbReference type="HAMAP" id="MF_00186">
    <property type="entry name" value="Glycerol_kin"/>
    <property type="match status" value="1"/>
</dbReference>
<dbReference type="InterPro" id="IPR043129">
    <property type="entry name" value="ATPase_NBD"/>
</dbReference>
<dbReference type="InterPro" id="IPR000577">
    <property type="entry name" value="Carb_kinase_FGGY"/>
</dbReference>
<dbReference type="InterPro" id="IPR018483">
    <property type="entry name" value="Carb_kinase_FGGY_CS"/>
</dbReference>
<dbReference type="InterPro" id="IPR018485">
    <property type="entry name" value="FGGY_C"/>
</dbReference>
<dbReference type="InterPro" id="IPR018484">
    <property type="entry name" value="FGGY_N"/>
</dbReference>
<dbReference type="InterPro" id="IPR005999">
    <property type="entry name" value="Glycerol_kin"/>
</dbReference>
<dbReference type="NCBIfam" id="TIGR01311">
    <property type="entry name" value="glycerol_kin"/>
    <property type="match status" value="1"/>
</dbReference>
<dbReference type="NCBIfam" id="NF000756">
    <property type="entry name" value="PRK00047.1"/>
    <property type="match status" value="1"/>
</dbReference>
<dbReference type="PANTHER" id="PTHR10196:SF69">
    <property type="entry name" value="GLYCEROL KINASE"/>
    <property type="match status" value="1"/>
</dbReference>
<dbReference type="PANTHER" id="PTHR10196">
    <property type="entry name" value="SUGAR KINASE"/>
    <property type="match status" value="1"/>
</dbReference>
<dbReference type="Pfam" id="PF02782">
    <property type="entry name" value="FGGY_C"/>
    <property type="match status" value="1"/>
</dbReference>
<dbReference type="Pfam" id="PF00370">
    <property type="entry name" value="FGGY_N"/>
    <property type="match status" value="1"/>
</dbReference>
<dbReference type="PIRSF" id="PIRSF000538">
    <property type="entry name" value="GlpK"/>
    <property type="match status" value="1"/>
</dbReference>
<dbReference type="SUPFAM" id="SSF53067">
    <property type="entry name" value="Actin-like ATPase domain"/>
    <property type="match status" value="2"/>
</dbReference>
<dbReference type="PROSITE" id="PS00933">
    <property type="entry name" value="FGGY_KINASES_1"/>
    <property type="match status" value="1"/>
</dbReference>
<dbReference type="PROSITE" id="PS00445">
    <property type="entry name" value="FGGY_KINASES_2"/>
    <property type="match status" value="1"/>
</dbReference>
<evidence type="ECO:0000255" key="1">
    <source>
        <dbReference type="HAMAP-Rule" id="MF_00186"/>
    </source>
</evidence>
<sequence length="499" mass="54563">MQDQYILALDQGTTSSRAMLFDRNGNVVSVAQKEFRQIYPHPGWVEHDPLEIWATQAGVAAEAVTHAGLNGTSIAAIGITNQRETTIVWDRQTGHPIYNAIVWQDRRTADFCDQLKAQGLEDEVRAKTGLPVDSYFSATKIRWILDNVEGAREKAKQGKLAFGTVDSWLVWNFTKHELHITDVTNASRTMLFNIHTLQWDDALLDALDIPRSMLPEVRPSSEVYGPTKTTVFASKIPLAGIAGDQHAALFGQMCTRSGMVKNTYGTGCFLVMNTGTKPIESKNNLVTTIAWQIGDQINYALEGSIFIAGAVVQWLRDGLGIIRSASEVETLARGVEHCDGVYLVPAFAGLGAPHWNARARGTLFGVTRGTTSAHIARAALDSIAYQSMDVLKAMEADSGIHINELRVDGGACANNLLMQFQADILGVDAVRPQVSETTALGAAYLAGLATGYWKDIEELQNQWKLEHRFSPSLPADQAKACLDGWQRAIRAAKAWADAP</sequence>
<gene>
    <name evidence="1" type="primary">glpK</name>
    <name type="ordered locus">Bphy_0419</name>
</gene>
<proteinExistence type="inferred from homology"/>
<organism>
    <name type="scientific">Paraburkholderia phymatum (strain DSM 17167 / CIP 108236 / LMG 21445 / STM815)</name>
    <name type="common">Burkholderia phymatum</name>
    <dbReference type="NCBI Taxonomy" id="391038"/>
    <lineage>
        <taxon>Bacteria</taxon>
        <taxon>Pseudomonadati</taxon>
        <taxon>Pseudomonadota</taxon>
        <taxon>Betaproteobacteria</taxon>
        <taxon>Burkholderiales</taxon>
        <taxon>Burkholderiaceae</taxon>
        <taxon>Paraburkholderia</taxon>
    </lineage>
</organism>
<comment type="function">
    <text evidence="1">Key enzyme in the regulation of glycerol uptake and metabolism. Catalyzes the phosphorylation of glycerol to yield sn-glycerol 3-phosphate.</text>
</comment>
<comment type="catalytic activity">
    <reaction evidence="1">
        <text>glycerol + ATP = sn-glycerol 3-phosphate + ADP + H(+)</text>
        <dbReference type="Rhea" id="RHEA:21644"/>
        <dbReference type="ChEBI" id="CHEBI:15378"/>
        <dbReference type="ChEBI" id="CHEBI:17754"/>
        <dbReference type="ChEBI" id="CHEBI:30616"/>
        <dbReference type="ChEBI" id="CHEBI:57597"/>
        <dbReference type="ChEBI" id="CHEBI:456216"/>
        <dbReference type="EC" id="2.7.1.30"/>
    </reaction>
</comment>
<comment type="activity regulation">
    <text evidence="1">Inhibited by fructose 1,6-bisphosphate (FBP).</text>
</comment>
<comment type="pathway">
    <text evidence="1">Polyol metabolism; glycerol degradation via glycerol kinase pathway; sn-glycerol 3-phosphate from glycerol: step 1/1.</text>
</comment>
<comment type="similarity">
    <text evidence="1">Belongs to the FGGY kinase family.</text>
</comment>
<name>GLPK_PARP8</name>
<keyword id="KW-0067">ATP-binding</keyword>
<keyword id="KW-0319">Glycerol metabolism</keyword>
<keyword id="KW-0418">Kinase</keyword>
<keyword id="KW-0547">Nucleotide-binding</keyword>
<keyword id="KW-1185">Reference proteome</keyword>
<keyword id="KW-0808">Transferase</keyword>
<accession>B2JD95</accession>
<protein>
    <recommendedName>
        <fullName evidence="1">Glycerol kinase</fullName>
        <ecNumber evidence="1">2.7.1.30</ecNumber>
    </recommendedName>
    <alternativeName>
        <fullName evidence="1">ATP:glycerol 3-phosphotransferase</fullName>
    </alternativeName>
    <alternativeName>
        <fullName evidence="1">Glycerokinase</fullName>
        <shortName evidence="1">GK</shortName>
    </alternativeName>
</protein>
<reference key="1">
    <citation type="journal article" date="2014" name="Stand. Genomic Sci.">
        <title>Complete genome sequence of Burkholderia phymatum STM815(T), a broad host range and efficient nitrogen-fixing symbiont of Mimosa species.</title>
        <authorList>
            <person name="Moulin L."/>
            <person name="Klonowska A."/>
            <person name="Caroline B."/>
            <person name="Booth K."/>
            <person name="Vriezen J.A."/>
            <person name="Melkonian R."/>
            <person name="James E.K."/>
            <person name="Young J.P."/>
            <person name="Bena G."/>
            <person name="Hauser L."/>
            <person name="Land M."/>
            <person name="Kyrpides N."/>
            <person name="Bruce D."/>
            <person name="Chain P."/>
            <person name="Copeland A."/>
            <person name="Pitluck S."/>
            <person name="Woyke T."/>
            <person name="Lizotte-Waniewski M."/>
            <person name="Bristow J."/>
            <person name="Riley M."/>
        </authorList>
    </citation>
    <scope>NUCLEOTIDE SEQUENCE [LARGE SCALE GENOMIC DNA]</scope>
    <source>
        <strain>DSM 17167 / CIP 108236 / LMG 21445 / STM815</strain>
    </source>
</reference>
<feature type="chain" id="PRO_1000098722" description="Glycerol kinase">
    <location>
        <begin position="1"/>
        <end position="499"/>
    </location>
</feature>
<feature type="binding site" evidence="1">
    <location>
        <position position="13"/>
    </location>
    <ligand>
        <name>ADP</name>
        <dbReference type="ChEBI" id="CHEBI:456216"/>
    </ligand>
</feature>
<feature type="binding site" evidence="1">
    <location>
        <position position="13"/>
    </location>
    <ligand>
        <name>ATP</name>
        <dbReference type="ChEBI" id="CHEBI:30616"/>
    </ligand>
</feature>
<feature type="binding site" evidence="1">
    <location>
        <position position="13"/>
    </location>
    <ligand>
        <name>sn-glycerol 3-phosphate</name>
        <dbReference type="ChEBI" id="CHEBI:57597"/>
    </ligand>
</feature>
<feature type="binding site" evidence="1">
    <location>
        <position position="14"/>
    </location>
    <ligand>
        <name>ATP</name>
        <dbReference type="ChEBI" id="CHEBI:30616"/>
    </ligand>
</feature>
<feature type="binding site" evidence="1">
    <location>
        <position position="15"/>
    </location>
    <ligand>
        <name>ATP</name>
        <dbReference type="ChEBI" id="CHEBI:30616"/>
    </ligand>
</feature>
<feature type="binding site" evidence="1">
    <location>
        <position position="17"/>
    </location>
    <ligand>
        <name>ADP</name>
        <dbReference type="ChEBI" id="CHEBI:456216"/>
    </ligand>
</feature>
<feature type="binding site" evidence="1">
    <location>
        <position position="83"/>
    </location>
    <ligand>
        <name>glycerol</name>
        <dbReference type="ChEBI" id="CHEBI:17754"/>
    </ligand>
</feature>
<feature type="binding site" evidence="1">
    <location>
        <position position="83"/>
    </location>
    <ligand>
        <name>sn-glycerol 3-phosphate</name>
        <dbReference type="ChEBI" id="CHEBI:57597"/>
    </ligand>
</feature>
<feature type="binding site" evidence="1">
    <location>
        <position position="84"/>
    </location>
    <ligand>
        <name>glycerol</name>
        <dbReference type="ChEBI" id="CHEBI:17754"/>
    </ligand>
</feature>
<feature type="binding site" evidence="1">
    <location>
        <position position="84"/>
    </location>
    <ligand>
        <name>sn-glycerol 3-phosphate</name>
        <dbReference type="ChEBI" id="CHEBI:57597"/>
    </ligand>
</feature>
<feature type="binding site" evidence="1">
    <location>
        <position position="135"/>
    </location>
    <ligand>
        <name>glycerol</name>
        <dbReference type="ChEBI" id="CHEBI:17754"/>
    </ligand>
</feature>
<feature type="binding site" evidence="1">
    <location>
        <position position="135"/>
    </location>
    <ligand>
        <name>sn-glycerol 3-phosphate</name>
        <dbReference type="ChEBI" id="CHEBI:57597"/>
    </ligand>
</feature>
<feature type="binding site" evidence="1">
    <location>
        <position position="244"/>
    </location>
    <ligand>
        <name>glycerol</name>
        <dbReference type="ChEBI" id="CHEBI:17754"/>
    </ligand>
</feature>
<feature type="binding site" evidence="1">
    <location>
        <position position="244"/>
    </location>
    <ligand>
        <name>sn-glycerol 3-phosphate</name>
        <dbReference type="ChEBI" id="CHEBI:57597"/>
    </ligand>
</feature>
<feature type="binding site" evidence="1">
    <location>
        <position position="245"/>
    </location>
    <ligand>
        <name>glycerol</name>
        <dbReference type="ChEBI" id="CHEBI:17754"/>
    </ligand>
</feature>
<feature type="binding site" evidence="1">
    <location>
        <position position="266"/>
    </location>
    <ligand>
        <name>ADP</name>
        <dbReference type="ChEBI" id="CHEBI:456216"/>
    </ligand>
</feature>
<feature type="binding site" evidence="1">
    <location>
        <position position="266"/>
    </location>
    <ligand>
        <name>ATP</name>
        <dbReference type="ChEBI" id="CHEBI:30616"/>
    </ligand>
</feature>
<feature type="binding site" evidence="1">
    <location>
        <position position="309"/>
    </location>
    <ligand>
        <name>ADP</name>
        <dbReference type="ChEBI" id="CHEBI:456216"/>
    </ligand>
</feature>
<feature type="binding site" evidence="1">
    <location>
        <position position="309"/>
    </location>
    <ligand>
        <name>ATP</name>
        <dbReference type="ChEBI" id="CHEBI:30616"/>
    </ligand>
</feature>
<feature type="binding site" evidence="1">
    <location>
        <position position="313"/>
    </location>
    <ligand>
        <name>ATP</name>
        <dbReference type="ChEBI" id="CHEBI:30616"/>
    </ligand>
</feature>
<feature type="binding site" evidence="1">
    <location>
        <position position="410"/>
    </location>
    <ligand>
        <name>ADP</name>
        <dbReference type="ChEBI" id="CHEBI:456216"/>
    </ligand>
</feature>
<feature type="binding site" evidence="1">
    <location>
        <position position="410"/>
    </location>
    <ligand>
        <name>ATP</name>
        <dbReference type="ChEBI" id="CHEBI:30616"/>
    </ligand>
</feature>
<feature type="binding site" evidence="1">
    <location>
        <position position="414"/>
    </location>
    <ligand>
        <name>ADP</name>
        <dbReference type="ChEBI" id="CHEBI:456216"/>
    </ligand>
</feature>